<gene>
    <name type="primary">ZDS2</name>
    <name type="synonym">MCS1</name>
    <name type="ordered locus">YML109W</name>
    <name type="ORF">YM8339.10</name>
</gene>
<organism>
    <name type="scientific">Saccharomyces cerevisiae (strain ATCC 204508 / S288c)</name>
    <name type="common">Baker's yeast</name>
    <dbReference type="NCBI Taxonomy" id="559292"/>
    <lineage>
        <taxon>Eukaryota</taxon>
        <taxon>Fungi</taxon>
        <taxon>Dikarya</taxon>
        <taxon>Ascomycota</taxon>
        <taxon>Saccharomycotina</taxon>
        <taxon>Saccharomycetes</taxon>
        <taxon>Saccharomycetales</taxon>
        <taxon>Saccharomycetaceae</taxon>
        <taxon>Saccharomyces</taxon>
    </lineage>
</organism>
<protein>
    <recommendedName>
        <fullName>Protein ZDS2</fullName>
    </recommendedName>
</protein>
<comment type="function">
    <text evidence="3 5">Acts as a negative regulator of polarized growth via an alternative mechanism to ZDS1. In heat-stressed cells appears to play a role in localizing BCY1 to the cytoplasm. Seems to interact with, and down-regulate, CDC42. Also acts as a suppressor of PKC1. May act as an integration point for distinct signaling pathways helping to maintain a balance among these different pathways.</text>
</comment>
<comment type="subunit">
    <text evidence="2">Interacts with SKG6.</text>
</comment>
<comment type="interaction">
    <interactant intactId="EBI-29637">
        <id>P54786</id>
    </interactant>
    <interactant intactId="EBI-3719">
        <id>P38041</id>
        <label>BOI1</label>
    </interactant>
    <organismsDiffer>false</organismsDiffer>
    <experiments>3</experiments>
</comment>
<comment type="interaction">
    <interactant intactId="EBI-29637">
        <id>P54786</id>
    </interactant>
    <interactant intactId="EBI-17313">
        <id>P32790</id>
        <label>SLA1</label>
    </interactant>
    <organismsDiffer>false</organismsDiffer>
    <experiments>3</experiments>
</comment>
<comment type="miscellaneous">
    <text>'ZDS' means 'zillion different screens' as both ZDS1 and ZDS2 have been found by a wide variety of genetic screens.</text>
</comment>
<comment type="miscellaneous">
    <text evidence="4">Present with 105 molecules/cell in log phase SD medium.</text>
</comment>
<comment type="similarity">
    <text evidence="6">To yeast ZDS1/NRC1/CES1.</text>
</comment>
<proteinExistence type="evidence at protein level"/>
<accession>P54786</accession>
<accession>D6W0H5</accession>
<name>ZDS2_YEAST</name>
<evidence type="ECO:0000256" key="1">
    <source>
        <dbReference type="SAM" id="MobiDB-lite"/>
    </source>
</evidence>
<evidence type="ECO:0000269" key="2">
    <source>
    </source>
</evidence>
<evidence type="ECO:0000269" key="3">
    <source>
    </source>
</evidence>
<evidence type="ECO:0000269" key="4">
    <source>
    </source>
</evidence>
<evidence type="ECO:0000269" key="5">
    <source>
    </source>
</evidence>
<evidence type="ECO:0000305" key="6"/>
<evidence type="ECO:0007744" key="7">
    <source>
    </source>
</evidence>
<sequence length="942" mass="105496">MVLMEDMQNKDGHNTVENSSGGTDSNNNIQMRRMRKTQLSKKELFEKRKSDVLIAAKSLDTEIQNVKNLKRLSIGSMDLVIDPELEFKVNSRNSYSSDSSKESLQESLHEENIIRSEQKEEQGSEDNDAYEEGDATNVDDSIDITQTEYLHDEETLEKEKIIRNASSSTSSSARVTSRNRRLSGVKTLAHDVVLDVENDHDSKMVDLTQNLLWVPADQHPNVKPENYLELIQDTLQNIQISTNQDIDENKLELGNNHVISNRKRTGSVVRRPSRLKTSYTKFDDEPPLADKPQEGEIQVDKRISSSDIKTIRSVSLKEITEELTKISNNAGLTDSDAVTLARSLSMSGSFTNESLHLNGNHTENDNEFASNMFNETGLTIPERSSLRRSKFNTYKIRLEGSSLPQAVKLNSLMNIQTNDNRRSASSPASYTQVPQEQASLNDFHEIFDHYRRTSTDWSTENEKYVDSTNYYSDEEDLTHASISQESSLLSTDSSNNSVLIKPHNTGSMISEKLDQHVSSSEKSNTNNSEANHGWSWLNSSNGSLNANEQTYQQLTDDEDDEECVDNEKADFVNLSVSRRAKSTKRASERINHSKNRHSPIFQIHSEEAKSVVITPSVVSSSESQPSKPTAPAVVEKKVELPTDTQASTHKKNSLEKRLAKLFKRKQHNGTCKSDVKVIKKSVKKELKKKASHSSLSKFRKSPKKKPQEAEVERPSSPTKTITTEDIDTASVIEPEVRSSNASTLLPDSHTSHSSEFVVETISELDGDDSFDISGGDVNYDVEVHSSISRDTTAGLEEDIGAEREDNTSPTAPQISTLPPRKLTFEDVVKPDYSNAPIKFTDSAFGFPLPMITNSTVIMFDHRLGINVERAIYRLSHLKLSDPGRELRQQVLLSNFMYSYLNLVNHTLYMEQVGTGDIAFNGDSALGMMDKNDSDGTILIPDI</sequence>
<reference key="1">
    <citation type="journal article" date="1996" name="Mol. Cell. Biol.">
        <title>Mutations in the homologous ZDS1 and ZDS2 genes affect cell cycle progression.</title>
        <authorList>
            <person name="Yu Y."/>
            <person name="Jiang Y.W."/>
            <person name="Wellinger R.J."/>
            <person name="Carlson K."/>
            <person name="Roberts J.M."/>
            <person name="Stillman D.J."/>
        </authorList>
    </citation>
    <scope>NUCLEOTIDE SEQUENCE [GENOMIC DNA]</scope>
</reference>
<reference key="2">
    <citation type="journal article" date="1997" name="Nature">
        <title>The nucleotide sequence of Saccharomyces cerevisiae chromosome XIII.</title>
        <authorList>
            <person name="Bowman S."/>
            <person name="Churcher C.M."/>
            <person name="Badcock K."/>
            <person name="Brown D."/>
            <person name="Chillingworth T."/>
            <person name="Connor R."/>
            <person name="Dedman K."/>
            <person name="Devlin K."/>
            <person name="Gentles S."/>
            <person name="Hamlin N."/>
            <person name="Hunt S."/>
            <person name="Jagels K."/>
            <person name="Lye G."/>
            <person name="Moule S."/>
            <person name="Odell C."/>
            <person name="Pearson D."/>
            <person name="Rajandream M.A."/>
            <person name="Rice P."/>
            <person name="Skelton J."/>
            <person name="Walsh S.V."/>
            <person name="Whitehead S."/>
            <person name="Barrell B.G."/>
        </authorList>
    </citation>
    <scope>NUCLEOTIDE SEQUENCE [LARGE SCALE GENOMIC DNA]</scope>
    <source>
        <strain>ATCC 204508 / S288c</strain>
    </source>
</reference>
<reference key="3">
    <citation type="journal article" date="2014" name="G3 (Bethesda)">
        <title>The reference genome sequence of Saccharomyces cerevisiae: Then and now.</title>
        <authorList>
            <person name="Engel S.R."/>
            <person name="Dietrich F.S."/>
            <person name="Fisk D.G."/>
            <person name="Binkley G."/>
            <person name="Balakrishnan R."/>
            <person name="Costanzo M.C."/>
            <person name="Dwight S.S."/>
            <person name="Hitz B.C."/>
            <person name="Karra K."/>
            <person name="Nash R.S."/>
            <person name="Weng S."/>
            <person name="Wong E.D."/>
            <person name="Lloyd P."/>
            <person name="Skrzypek M.S."/>
            <person name="Miyasato S.R."/>
            <person name="Simison M."/>
            <person name="Cherry J.M."/>
        </authorList>
    </citation>
    <scope>GENOME REANNOTATION</scope>
    <source>
        <strain>ATCC 204508 / S288c</strain>
    </source>
</reference>
<reference key="4">
    <citation type="journal article" date="2001" name="J. Cell Biol.">
        <title>A protein interaction map for cell polarity development.</title>
        <authorList>
            <person name="Drees B.L."/>
            <person name="Sundin B.A."/>
            <person name="Brazeau E."/>
            <person name="Caviston J.P."/>
            <person name="Chen G.-C."/>
            <person name="Guo W."/>
            <person name="Kozminski K.G."/>
            <person name="Lau M.W."/>
            <person name="Moskow J.J."/>
            <person name="Tong A."/>
            <person name="Schenkman L.R."/>
            <person name="McKenzie A. III"/>
            <person name="Brennwald P.J."/>
            <person name="Longtine M."/>
            <person name="Bi E."/>
            <person name="Chan C."/>
            <person name="Novick P."/>
            <person name="Boone C."/>
            <person name="Pringle J.R."/>
            <person name="Davis T.N."/>
            <person name="Fields S."/>
            <person name="Drubin D.G."/>
        </authorList>
    </citation>
    <scope>INTERACTION WITH SKG6</scope>
</reference>
<reference key="5">
    <citation type="journal article" date="2003" name="J. Biol. Chem.">
        <title>Feedback inhibition on cell wall integrity signaling by Zds1 involves Gsk3 phosphorylation of a cAMP-dependent protein kinase regulatory subunit.</title>
        <authorList>
            <person name="Griffioen G."/>
            <person name="Swinnen S."/>
            <person name="Thevelein J.M."/>
        </authorList>
    </citation>
    <scope>FUNCTION</scope>
</reference>
<reference key="6">
    <citation type="journal article" date="2003" name="Nature">
        <title>Global analysis of protein expression in yeast.</title>
        <authorList>
            <person name="Ghaemmaghami S."/>
            <person name="Huh W.-K."/>
            <person name="Bower K."/>
            <person name="Howson R.W."/>
            <person name="Belle A."/>
            <person name="Dephoure N."/>
            <person name="O'Shea E.K."/>
            <person name="Weissman J.S."/>
        </authorList>
    </citation>
    <scope>LEVEL OF PROTEIN EXPRESSION [LARGE SCALE ANALYSIS]</scope>
</reference>
<reference key="7">
    <citation type="journal article" date="2005" name="Genetics">
        <title>Pkc1 acts through Zds1 and Gic1 to suppress growth and cell polarity defects of a yeast eIF5A mutant.</title>
        <authorList>
            <person name="Zanelli C.F."/>
            <person name="Valentini S.R."/>
        </authorList>
    </citation>
    <scope>FUNCTION</scope>
</reference>
<reference key="8">
    <citation type="journal article" date="2007" name="J. Proteome Res.">
        <title>Large-scale phosphorylation analysis of alpha-factor-arrested Saccharomyces cerevisiae.</title>
        <authorList>
            <person name="Li X."/>
            <person name="Gerber S.A."/>
            <person name="Rudner A.D."/>
            <person name="Beausoleil S.A."/>
            <person name="Haas W."/>
            <person name="Villen J."/>
            <person name="Elias J.E."/>
            <person name="Gygi S.P."/>
        </authorList>
    </citation>
    <scope>PHOSPHORYLATION [LARGE SCALE ANALYSIS] AT SER-50</scope>
    <scope>IDENTIFICATION BY MASS SPECTROMETRY [LARGE SCALE ANALYSIS]</scope>
    <source>
        <strain>ADR376</strain>
    </source>
</reference>
<reference key="9">
    <citation type="journal article" date="2007" name="Proc. Natl. Acad. Sci. U.S.A.">
        <title>Analysis of phosphorylation sites on proteins from Saccharomyces cerevisiae by electron transfer dissociation (ETD) mass spectrometry.</title>
        <authorList>
            <person name="Chi A."/>
            <person name="Huttenhower C."/>
            <person name="Geer L.Y."/>
            <person name="Coon J.J."/>
            <person name="Syka J.E.P."/>
            <person name="Bai D.L."/>
            <person name="Shabanowitz J."/>
            <person name="Burke D.J."/>
            <person name="Troyanskaya O.G."/>
            <person name="Hunt D.F."/>
        </authorList>
    </citation>
    <scope>IDENTIFICATION BY MASS SPECTROMETRY [LARGE SCALE ANALYSIS]</scope>
</reference>
<reference key="10">
    <citation type="journal article" date="2009" name="Science">
        <title>Global analysis of Cdk1 substrate phosphorylation sites provides insights into evolution.</title>
        <authorList>
            <person name="Holt L.J."/>
            <person name="Tuch B.B."/>
            <person name="Villen J."/>
            <person name="Johnson A.D."/>
            <person name="Gygi S.P."/>
            <person name="Morgan D.O."/>
        </authorList>
    </citation>
    <scope>IDENTIFICATION BY MASS SPECTROMETRY [LARGE SCALE ANALYSIS]</scope>
</reference>
<feature type="chain" id="PRO_0000066570" description="Protein ZDS2">
    <location>
        <begin position="1"/>
        <end position="942"/>
    </location>
</feature>
<feature type="region of interest" description="Disordered" evidence="1">
    <location>
        <begin position="1"/>
        <end position="28"/>
    </location>
</feature>
<feature type="region of interest" description="Disordered" evidence="1">
    <location>
        <begin position="91"/>
        <end position="142"/>
    </location>
</feature>
<feature type="region of interest" description="Disordered" evidence="1">
    <location>
        <begin position="483"/>
        <end position="541"/>
    </location>
</feature>
<feature type="region of interest" description="Disordered" evidence="1">
    <location>
        <begin position="617"/>
        <end position="654"/>
    </location>
</feature>
<feature type="region of interest" description="Disordered" evidence="1">
    <location>
        <begin position="682"/>
        <end position="728"/>
    </location>
</feature>
<feature type="region of interest" description="Disordered" evidence="1">
    <location>
        <begin position="788"/>
        <end position="817"/>
    </location>
</feature>
<feature type="compositionally biased region" description="Polar residues" evidence="1">
    <location>
        <begin position="15"/>
        <end position="28"/>
    </location>
</feature>
<feature type="compositionally biased region" description="Basic and acidic residues" evidence="1">
    <location>
        <begin position="99"/>
        <end position="122"/>
    </location>
</feature>
<feature type="compositionally biased region" description="Acidic residues" evidence="1">
    <location>
        <begin position="123"/>
        <end position="134"/>
    </location>
</feature>
<feature type="compositionally biased region" description="Low complexity" evidence="1">
    <location>
        <begin position="483"/>
        <end position="497"/>
    </location>
</feature>
<feature type="compositionally biased region" description="Low complexity" evidence="1">
    <location>
        <begin position="518"/>
        <end position="541"/>
    </location>
</feature>
<feature type="compositionally biased region" description="Low complexity" evidence="1">
    <location>
        <begin position="617"/>
        <end position="627"/>
    </location>
</feature>
<feature type="compositionally biased region" description="Basic residues" evidence="1">
    <location>
        <begin position="682"/>
        <end position="704"/>
    </location>
</feature>
<feature type="compositionally biased region" description="Polar residues" evidence="1">
    <location>
        <begin position="807"/>
        <end position="816"/>
    </location>
</feature>
<feature type="modified residue" description="Phosphoserine" evidence="7">
    <location>
        <position position="50"/>
    </location>
</feature>
<feature type="sequence conflict" description="In Ref. 1; AAB37541." evidence="6" ref="1">
    <original>M</original>
    <variation>V</variation>
    <location>
        <position position="7"/>
    </location>
</feature>
<feature type="sequence conflict" description="In Ref. 1; AAB37541." evidence="6" ref="1">
    <original>T</original>
    <variation>S</variation>
    <location>
        <position position="23"/>
    </location>
</feature>
<feature type="sequence conflict" description="In Ref. 1; AAB37541." evidence="6" ref="1">
    <original>A</original>
    <variation>P</variation>
    <location>
        <position position="530"/>
    </location>
</feature>
<feature type="sequence conflict" description="In Ref. 1; AAB37541." evidence="6" ref="1">
    <original>A</original>
    <variation>G</variation>
    <location>
        <position position="546"/>
    </location>
</feature>
<feature type="sequence conflict" description="In Ref. 1; AAB37541." evidence="6" ref="1">
    <original>V</original>
    <variation>A</variation>
    <location>
        <position position="633"/>
    </location>
</feature>
<feature type="sequence conflict" description="In Ref. 1; AAB37541." evidence="6" ref="1">
    <original>N</original>
    <variation>S</variation>
    <location>
        <position position="668"/>
    </location>
</feature>
<feature type="sequence conflict" description="In Ref. 1; AAB37541." evidence="6" ref="1">
    <original>V</original>
    <variation>VNC</variation>
    <location>
        <position position="711"/>
    </location>
</feature>
<feature type="sequence conflict" description="In Ref. 1; AAB37541." evidence="6" ref="1">
    <location>
        <position position="723"/>
    </location>
</feature>
<feature type="sequence conflict" description="In Ref. 1; AAB37541." evidence="6" ref="1">
    <original>A</original>
    <variation>E</variation>
    <location>
        <position position="729"/>
    </location>
</feature>
<feature type="sequence conflict" description="In Ref. 1; AAB37541." evidence="6" ref="1">
    <original>S</original>
    <variation>P</variation>
    <location>
        <position position="833"/>
    </location>
</feature>
<feature type="sequence conflict" description="In Ref. 1; AAB37541." evidence="6" ref="1">
    <original>TGDIAFNGDSALGMMDKNDSDGTILIPDI</original>
    <variation>HWRYSLQW</variation>
    <location>
        <begin position="914"/>
        <end position="942"/>
    </location>
</feature>
<keyword id="KW-0597">Phosphoprotein</keyword>
<keyword id="KW-1185">Reference proteome</keyword>
<dbReference type="EMBL" id="U32938">
    <property type="protein sequence ID" value="AAB37541.1"/>
    <property type="molecule type" value="Genomic_DNA"/>
</dbReference>
<dbReference type="EMBL" id="Z49210">
    <property type="protein sequence ID" value="CAA89109.1"/>
    <property type="molecule type" value="Genomic_DNA"/>
</dbReference>
<dbReference type="EMBL" id="BK006946">
    <property type="protein sequence ID" value="DAA09789.1"/>
    <property type="molecule type" value="Genomic_DNA"/>
</dbReference>
<dbReference type="PIR" id="S53963">
    <property type="entry name" value="S53963"/>
</dbReference>
<dbReference type="RefSeq" id="NP_013598.1">
    <property type="nucleotide sequence ID" value="NM_001182471.1"/>
</dbReference>
<dbReference type="SMR" id="P54786"/>
<dbReference type="BioGRID" id="35095">
    <property type="interactions" value="113"/>
</dbReference>
<dbReference type="DIP" id="DIP-1517N"/>
<dbReference type="FunCoup" id="P54786">
    <property type="interactions" value="242"/>
</dbReference>
<dbReference type="IntAct" id="P54786">
    <property type="interactions" value="58"/>
</dbReference>
<dbReference type="MINT" id="P54786"/>
<dbReference type="STRING" id="4932.YML109W"/>
<dbReference type="MoonDB" id="P54786">
    <property type="type" value="Predicted"/>
</dbReference>
<dbReference type="CarbonylDB" id="P54786"/>
<dbReference type="iPTMnet" id="P54786"/>
<dbReference type="PaxDb" id="4932-YML109W"/>
<dbReference type="PeptideAtlas" id="P54786"/>
<dbReference type="EnsemblFungi" id="YML109W_mRNA">
    <property type="protein sequence ID" value="YML109W"/>
    <property type="gene ID" value="YML109W"/>
</dbReference>
<dbReference type="GeneID" id="854931"/>
<dbReference type="KEGG" id="sce:YML109W"/>
<dbReference type="AGR" id="SGD:S000004577"/>
<dbReference type="SGD" id="S000004577">
    <property type="gene designation" value="ZDS2"/>
</dbReference>
<dbReference type="VEuPathDB" id="FungiDB:YML109W"/>
<dbReference type="eggNOG" id="ENOG502RC08">
    <property type="taxonomic scope" value="Eukaryota"/>
</dbReference>
<dbReference type="GeneTree" id="ENSGT00940000176802"/>
<dbReference type="HOGENOM" id="CLU_011999_0_0_1"/>
<dbReference type="InParanoid" id="P54786"/>
<dbReference type="OMA" id="SKFNTYK"/>
<dbReference type="OrthoDB" id="5589766at2759"/>
<dbReference type="BioCyc" id="YEAST:G3O-32692-MONOMER"/>
<dbReference type="BioGRID-ORCS" id="854931">
    <property type="hits" value="1 hit in 10 CRISPR screens"/>
</dbReference>
<dbReference type="PRO" id="PR:P54786"/>
<dbReference type="Proteomes" id="UP000002311">
    <property type="component" value="Chromosome XIII"/>
</dbReference>
<dbReference type="RNAct" id="P54786">
    <property type="molecule type" value="protein"/>
</dbReference>
<dbReference type="GO" id="GO:0005935">
    <property type="term" value="C:cellular bud neck"/>
    <property type="evidence" value="ECO:0000314"/>
    <property type="project" value="SGD"/>
</dbReference>
<dbReference type="GO" id="GO:0005934">
    <property type="term" value="C:cellular bud tip"/>
    <property type="evidence" value="ECO:0000314"/>
    <property type="project" value="SGD"/>
</dbReference>
<dbReference type="GO" id="GO:0005737">
    <property type="term" value="C:cytoplasm"/>
    <property type="evidence" value="ECO:0000314"/>
    <property type="project" value="SGD"/>
</dbReference>
<dbReference type="GO" id="GO:0030010">
    <property type="term" value="P:establishment of cell polarity"/>
    <property type="evidence" value="ECO:0000316"/>
    <property type="project" value="SGD"/>
</dbReference>
<dbReference type="GO" id="GO:0010971">
    <property type="term" value="P:positive regulation of G2/M transition of mitotic cell cycle"/>
    <property type="evidence" value="ECO:0000315"/>
    <property type="project" value="SGD"/>
</dbReference>
<dbReference type="GO" id="GO:0000183">
    <property type="term" value="P:rDNA heterochromatin formation"/>
    <property type="evidence" value="ECO:0000315"/>
    <property type="project" value="SGD"/>
</dbReference>
<dbReference type="GO" id="GO:0032880">
    <property type="term" value="P:regulation of protein localization"/>
    <property type="evidence" value="ECO:0000316"/>
    <property type="project" value="SGD"/>
</dbReference>
<dbReference type="InterPro" id="IPR040206">
    <property type="entry name" value="Zds1/2"/>
</dbReference>
<dbReference type="InterPro" id="IPR013941">
    <property type="entry name" value="ZDS1_C"/>
</dbReference>
<dbReference type="PANTHER" id="PTHR28089">
    <property type="entry name" value="PROTEIN ZDS1-RELATED"/>
    <property type="match status" value="1"/>
</dbReference>
<dbReference type="PANTHER" id="PTHR28089:SF1">
    <property type="entry name" value="PROTEIN ZDS1-RELATED"/>
    <property type="match status" value="1"/>
</dbReference>
<dbReference type="Pfam" id="PF08632">
    <property type="entry name" value="Zds_C"/>
    <property type="match status" value="1"/>
</dbReference>
<dbReference type="SMART" id="SM01327">
    <property type="entry name" value="Zds_C"/>
    <property type="match status" value="1"/>
</dbReference>